<dbReference type="EC" id="3.2.1.-" evidence="2 3 4"/>
<dbReference type="EMBL" id="AE003853">
    <property type="protein sequence ID" value="AAF96037.1"/>
    <property type="molecule type" value="Genomic_DNA"/>
</dbReference>
<dbReference type="PIR" id="F82500">
    <property type="entry name" value="F82500"/>
</dbReference>
<dbReference type="RefSeq" id="NP_232524.1">
    <property type="nucleotide sequence ID" value="NC_002506.1"/>
</dbReference>
<dbReference type="PDB" id="4NOO">
    <property type="method" value="X-ray"/>
    <property type="resolution" value="2.30 A"/>
    <property type="chains" value="A/C=813-1017"/>
</dbReference>
<dbReference type="PDB" id="4NSO">
    <property type="method" value="X-ray"/>
    <property type="resolution" value="2.40 A"/>
    <property type="chains" value="A=731-1009"/>
</dbReference>
<dbReference type="PDBsum" id="4NOO"/>
<dbReference type="PDBsum" id="4NSO"/>
<dbReference type="SMR" id="Q9KN42"/>
<dbReference type="IntAct" id="Q9KN42">
    <property type="interactions" value="1"/>
</dbReference>
<dbReference type="MINT" id="Q9KN42"/>
<dbReference type="STRING" id="243277.VC_A0123"/>
<dbReference type="DNASU" id="2612828"/>
<dbReference type="EnsemblBacteria" id="AAF96037">
    <property type="protein sequence ID" value="AAF96037"/>
    <property type="gene ID" value="VC_A0123"/>
</dbReference>
<dbReference type="KEGG" id="vch:VC_A0123"/>
<dbReference type="PATRIC" id="fig|243277.26.peg.2763"/>
<dbReference type="eggNOG" id="COG3409">
    <property type="taxonomic scope" value="Bacteria"/>
</dbReference>
<dbReference type="eggNOG" id="COG3501">
    <property type="taxonomic scope" value="Bacteria"/>
</dbReference>
<dbReference type="HOGENOM" id="CLU_004121_0_1_6"/>
<dbReference type="EvolutionaryTrace" id="Q9KN42"/>
<dbReference type="Proteomes" id="UP000000584">
    <property type="component" value="Chromosome 2"/>
</dbReference>
<dbReference type="GO" id="GO:0005576">
    <property type="term" value="C:extracellular region"/>
    <property type="evidence" value="ECO:0007669"/>
    <property type="project" value="UniProtKB-SubCell"/>
</dbReference>
<dbReference type="GO" id="GO:0016787">
    <property type="term" value="F:hydrolase activity"/>
    <property type="evidence" value="ECO:0007669"/>
    <property type="project" value="UniProtKB-KW"/>
</dbReference>
<dbReference type="Gene3D" id="2.30.110.50">
    <property type="match status" value="1"/>
</dbReference>
<dbReference type="Gene3D" id="4.10.220.110">
    <property type="match status" value="1"/>
</dbReference>
<dbReference type="Gene3D" id="3.55.50.10">
    <property type="entry name" value="Baseplate protein-like domains"/>
    <property type="match status" value="1"/>
</dbReference>
<dbReference type="Gene3D" id="2.40.50.230">
    <property type="entry name" value="Gp5 N-terminal domain"/>
    <property type="match status" value="1"/>
</dbReference>
<dbReference type="Gene3D" id="1.10.101.10">
    <property type="entry name" value="PGBD-like superfamily/PGBD"/>
    <property type="match status" value="1"/>
</dbReference>
<dbReference type="InterPro" id="IPR006531">
    <property type="entry name" value="Gp5/Vgr_OB"/>
</dbReference>
<dbReference type="InterPro" id="IPR054030">
    <property type="entry name" value="Gp5_Vgr_C"/>
</dbReference>
<dbReference type="InterPro" id="IPR002477">
    <property type="entry name" value="Peptidoglycan-bd-like"/>
</dbReference>
<dbReference type="InterPro" id="IPR036365">
    <property type="entry name" value="PGBD-like_sf"/>
</dbReference>
<dbReference type="InterPro" id="IPR036366">
    <property type="entry name" value="PGBDSf"/>
</dbReference>
<dbReference type="InterPro" id="IPR017847">
    <property type="entry name" value="T6SS_RhsGE_Vgr_subset"/>
</dbReference>
<dbReference type="InterPro" id="IPR006533">
    <property type="entry name" value="T6SS_Vgr_RhsGE"/>
</dbReference>
<dbReference type="InterPro" id="IPR050708">
    <property type="entry name" value="T6SS_VgrG/RHS"/>
</dbReference>
<dbReference type="InterPro" id="IPR049073">
    <property type="entry name" value="T6SS_VgrG3-like_C"/>
</dbReference>
<dbReference type="InterPro" id="IPR037026">
    <property type="entry name" value="Vgr_OB-fold_dom_sf"/>
</dbReference>
<dbReference type="NCBIfam" id="TIGR01646">
    <property type="entry name" value="vgr_GE"/>
    <property type="match status" value="1"/>
</dbReference>
<dbReference type="NCBIfam" id="TIGR03361">
    <property type="entry name" value="VI_Rhs_Vgr"/>
    <property type="match status" value="1"/>
</dbReference>
<dbReference type="PANTHER" id="PTHR32305">
    <property type="match status" value="1"/>
</dbReference>
<dbReference type="PANTHER" id="PTHR32305:SF11">
    <property type="entry name" value="TYPE VI SECRETION SYSTEM SPIKE PROTEIN VGRG3"/>
    <property type="match status" value="1"/>
</dbReference>
<dbReference type="Pfam" id="PF22178">
    <property type="entry name" value="Gp5_trimer_C"/>
    <property type="match status" value="1"/>
</dbReference>
<dbReference type="Pfam" id="PF01471">
    <property type="entry name" value="PG_binding_1"/>
    <property type="match status" value="1"/>
</dbReference>
<dbReference type="Pfam" id="PF04717">
    <property type="entry name" value="Phage_base_V"/>
    <property type="match status" value="1"/>
</dbReference>
<dbReference type="Pfam" id="PF05954">
    <property type="entry name" value="Phage_GPD"/>
    <property type="match status" value="1"/>
</dbReference>
<dbReference type="Pfam" id="PF21277">
    <property type="entry name" value="T6SS_VgrG3-like_C"/>
    <property type="match status" value="1"/>
</dbReference>
<dbReference type="SUPFAM" id="SSF69255">
    <property type="entry name" value="gp5 N-terminal domain-like"/>
    <property type="match status" value="1"/>
</dbReference>
<dbReference type="SUPFAM" id="SSF47090">
    <property type="entry name" value="PGBD-like"/>
    <property type="match status" value="1"/>
</dbReference>
<dbReference type="SUPFAM" id="SSF69349">
    <property type="entry name" value="Phage fibre proteins"/>
    <property type="match status" value="1"/>
</dbReference>
<dbReference type="SUPFAM" id="SSF69279">
    <property type="entry name" value="Phage tail proteins"/>
    <property type="match status" value="2"/>
</dbReference>
<evidence type="ECO:0000269" key="1">
    <source>
    </source>
</evidence>
<evidence type="ECO:0000269" key="2">
    <source>
    </source>
</evidence>
<evidence type="ECO:0000269" key="3">
    <source>
    </source>
</evidence>
<evidence type="ECO:0000269" key="4">
    <source>
    </source>
</evidence>
<evidence type="ECO:0000303" key="5">
    <source>
    </source>
</evidence>
<evidence type="ECO:0000303" key="6">
    <source>
    </source>
</evidence>
<evidence type="ECO:0000305" key="7"/>
<evidence type="ECO:0007744" key="8">
    <source>
        <dbReference type="PDB" id="4NOO"/>
    </source>
</evidence>
<evidence type="ECO:0007744" key="9">
    <source>
        <dbReference type="PDB" id="4NSO"/>
    </source>
</evidence>
<evidence type="ECO:0007829" key="10">
    <source>
        <dbReference type="PDB" id="4NOO"/>
    </source>
</evidence>
<evidence type="ECO:0007829" key="11">
    <source>
        <dbReference type="PDB" id="4NSO"/>
    </source>
</evidence>
<organism>
    <name type="scientific">Vibrio cholerae serotype O1 (strain ATCC 39315 / El Tor Inaba N16961)</name>
    <dbReference type="NCBI Taxonomy" id="243277"/>
    <lineage>
        <taxon>Bacteria</taxon>
        <taxon>Pseudomonadati</taxon>
        <taxon>Pseudomonadota</taxon>
        <taxon>Gammaproteobacteria</taxon>
        <taxon>Vibrionales</taxon>
        <taxon>Vibrionaceae</taxon>
        <taxon>Vibrio</taxon>
    </lineage>
</organism>
<gene>
    <name evidence="5" type="primary">vgrG3</name>
    <name type="ordered locus">VC_A0123</name>
</gene>
<comment type="function">
    <text evidence="1 2 3">Part of the type VI secretion system specialized secretion system, which delivers several virulence factors in both prokaryotic and eukaryotic cells during infection (PubMed:23341465, PubMed:23362380). Forms the spike at the tip of the elongating tube formed by haemolysin co-regulated protein Hcp. Allows the delivery of the TseL antibacterial toxin to target cells where it exerts its toxicity (PubMed:23362380). Additionally, acts directly as an effector and targets the cell wall peptidoglycan layer of prey cells for degradation via its C-terminus (PubMed:23341465, PubMed:23362380). Toxicity is counteracted by a cognate immunity protein TsiV3 (PubMed:23341465, PubMed:23362380, PubMed:24699653).</text>
</comment>
<comment type="subunit">
    <text evidence="1 2 3 4">Interacts with TsiV3 (PubMed:23341465, PubMed:24699653, PubMed:24751834). Interacts with TseL (PubMed:23362380).</text>
</comment>
<comment type="interaction">
    <interactant intactId="EBI-9356343">
        <id>Q9KN42</id>
    </interactant>
    <interactant intactId="EBI-9356338">
        <id>Q9KN41</id>
        <label>tsiV3</label>
    </interactant>
    <organismsDiffer>false</organismsDiffer>
    <experiments>11</experiments>
</comment>
<comment type="subcellular location">
    <subcellularLocation>
        <location evidence="1">Secreted</location>
    </subcellularLocation>
</comment>
<comment type="disruption phenotype">
    <text evidence="2">Mutants are unable to secrete TseL.</text>
</comment>
<comment type="similarity">
    <text evidence="7">Belongs to the VgrG protein family.</text>
</comment>
<accession>Q9KN42</accession>
<proteinExistence type="evidence at protein level"/>
<protein>
    <recommendedName>
        <fullName evidence="5">Type VI secretion system spike protein VgrG3</fullName>
    </recommendedName>
    <alternativeName>
        <fullName evidence="6">Muramidase Vgrg3C</fullName>
        <ecNumber evidence="2 3 4">3.2.1.-</ecNumber>
    </alternativeName>
</protein>
<sequence>MARLQFQLKVDGLEDESLVVRGFEGQESLSDSVWRCEPCYGFRYQVDLASALSNLTAEQFVDQTAHLTILRDGQVVQQINGIVRQLSKGDTGHRHTFYSLTLVPALERLSLRSNSRIFQQQSVPEIISILLQEMGIEDYAFALKRECAQREFCVQYRETDLQFLHRIAAEEGLVYSHLHEAQKHTLLFTDSSDSQPKLAKPVPYNALAGGEINLPYVVDLQFKTTAQVSHTELKDYSFKKPAYGFTQRTQGKDIAYQQPNYEHFDAPGRYKDDANGKAFSQIRLEYLRRDALLADAKSDEPLLLAGVRFDLQDHLDHAMNRDWLVVQANHQGTQPQALQEEGGSGATTYSNQLKLIPAHITWRARPCAKPQVDGPMIATVVGPQGEEIYCDNFGRVKVHFPWDRYSSSNEKSSCWVRVAQEWAGSQYGSMAIPRVGHEVIVSFLNGDPDQPIITGRTYHATNTAPYALPDHKTKTVLRTETHQGQGYNELSFEDQAGSEQILLHAQKDWDALIEHDHTEVIRHDQHLTVDNDRFTRIQRNQHLTVEGEVRSKIALDSSHEVGASLQHKVGQRIAVEAGKEISLKSGAKIVVEAGAELTLKAGGSFVKVDAGGVHLVGPAINLNAGGSAGSGSAYGGQLAAAPRMLAQAKPVAELVQPDIAASMQSGAARVIDVASLPTMMPSSANNTANDEPVAEEKTPERILKSDLLKPSDELEKLAKRQASAYRQGNHSDEVKLLQEALIKLGFDLGKAGADGDFGSKTKTAIEQFQKSYQPSHQTHPSYSIGAVDGIVGKGTLLALDEALMDGWVYENNIYQIWPLGKTSEKYESAGRGPGVISTGNGDYGGASYGCYQMSSNLGVVQKYIQSSKFKEFFSGLNPATKEFNVVWQDIASRYPQEFREEQHQFIKRTHYDIQIGHLRGKGLLFEHNRAAVHDLIWSTSVQFGGRTNLIFNALNGQNMESMTDKDIIILVQDYKLVNTERLFKSSPSWWSDLKKRAVSEKKALLELEIDGLEVDIK</sequence>
<feature type="chain" id="PRO_0000448967" description="Type VI secretion system spike protein VgrG3">
    <location>
        <begin position="1"/>
        <end position="1017"/>
    </location>
</feature>
<feature type="active site" evidence="2">
    <location>
        <position position="842"/>
    </location>
</feature>
<feature type="mutagenesis site" description="Almost complete loss of enzymatic activity." evidence="3">
    <original>E</original>
    <variation>Q</variation>
    <location>
        <position position="827"/>
    </location>
</feature>
<feature type="mutagenesis site" description="Complete loss of enzymatic activity." evidence="2 3">
    <original>D</original>
    <variation>N</variation>
    <location>
        <position position="842"/>
    </location>
</feature>
<feature type="helix" evidence="10">
    <location>
        <begin position="821"/>
        <end position="823"/>
    </location>
</feature>
<feature type="helix" evidence="10">
    <location>
        <begin position="824"/>
        <end position="827"/>
    </location>
</feature>
<feature type="turn" evidence="10">
    <location>
        <begin position="828"/>
        <end position="830"/>
    </location>
</feature>
<feature type="strand" evidence="10">
    <location>
        <begin position="836"/>
        <end position="838"/>
    </location>
</feature>
<feature type="strand" evidence="10">
    <location>
        <begin position="846"/>
        <end position="848"/>
    </location>
</feature>
<feature type="turn" evidence="10">
    <location>
        <begin position="849"/>
        <end position="852"/>
    </location>
</feature>
<feature type="turn" evidence="10">
    <location>
        <begin position="855"/>
        <end position="858"/>
    </location>
</feature>
<feature type="helix" evidence="10">
    <location>
        <begin position="859"/>
        <end position="866"/>
    </location>
</feature>
<feature type="helix" evidence="10">
    <location>
        <begin position="870"/>
        <end position="873"/>
    </location>
</feature>
<feature type="strand" evidence="11">
    <location>
        <begin position="878"/>
        <end position="880"/>
    </location>
</feature>
<feature type="helix" evidence="10">
    <location>
        <begin position="881"/>
        <end position="893"/>
    </location>
</feature>
<feature type="helix" evidence="10">
    <location>
        <begin position="895"/>
        <end position="909"/>
    </location>
</feature>
<feature type="helix" evidence="10">
    <location>
        <begin position="911"/>
        <end position="919"/>
    </location>
</feature>
<feature type="turn" evidence="10">
    <location>
        <begin position="920"/>
        <end position="922"/>
    </location>
</feature>
<feature type="helix" evidence="10">
    <location>
        <begin position="930"/>
        <end position="943"/>
    </location>
</feature>
<feature type="helix" evidence="10">
    <location>
        <begin position="949"/>
        <end position="953"/>
    </location>
</feature>
<feature type="turn" evidence="10">
    <location>
        <begin position="954"/>
        <end position="956"/>
    </location>
</feature>
<feature type="strand" evidence="11">
    <location>
        <begin position="959"/>
        <end position="961"/>
    </location>
</feature>
<feature type="helix" evidence="10">
    <location>
        <begin position="964"/>
        <end position="977"/>
    </location>
</feature>
<feature type="helix" evidence="10">
    <location>
        <begin position="979"/>
        <end position="982"/>
    </location>
</feature>
<feature type="turn" evidence="10">
    <location>
        <begin position="983"/>
        <end position="985"/>
    </location>
</feature>
<feature type="helix" evidence="10">
    <location>
        <begin position="987"/>
        <end position="989"/>
    </location>
</feature>
<feature type="helix" evidence="10">
    <location>
        <begin position="990"/>
        <end position="1009"/>
    </location>
</feature>
<reference key="1">
    <citation type="journal article" date="2000" name="Nature">
        <title>DNA sequence of both chromosomes of the cholera pathogen Vibrio cholerae.</title>
        <authorList>
            <person name="Heidelberg J.F."/>
            <person name="Eisen J.A."/>
            <person name="Nelson W.C."/>
            <person name="Clayton R.A."/>
            <person name="Gwinn M.L."/>
            <person name="Dodson R.J."/>
            <person name="Haft D.H."/>
            <person name="Hickey E.K."/>
            <person name="Peterson J.D."/>
            <person name="Umayam L.A."/>
            <person name="Gill S.R."/>
            <person name="Nelson K.E."/>
            <person name="Read T.D."/>
            <person name="Tettelin H."/>
            <person name="Richardson D.L."/>
            <person name="Ermolaeva M.D."/>
            <person name="Vamathevan J.J."/>
            <person name="Bass S."/>
            <person name="Qin H."/>
            <person name="Dragoi I."/>
            <person name="Sellers P."/>
            <person name="McDonald L.A."/>
            <person name="Utterback T.R."/>
            <person name="Fleischmann R.D."/>
            <person name="Nierman W.C."/>
            <person name="White O."/>
            <person name="Salzberg S.L."/>
            <person name="Smith H.O."/>
            <person name="Colwell R.R."/>
            <person name="Mekalanos J.J."/>
            <person name="Venter J.C."/>
            <person name="Fraser C.M."/>
        </authorList>
    </citation>
    <scope>NUCLEOTIDE SEQUENCE [LARGE SCALE GENOMIC DNA]</scope>
    <source>
        <strain>ATCC 39315 / El Tor Inaba N16961</strain>
    </source>
</reference>
<reference key="2">
    <citation type="journal article" date="2013" name="Proc. Natl. Acad. Sci. U.S.A.">
        <title>Identification of T6SS-dependent effector and immunity proteins by Tn-seq in Vibrio cholerae.</title>
        <authorList>
            <person name="Dong T.G."/>
            <person name="Ho B.T."/>
            <person name="Yoder-Himes D.R."/>
            <person name="Mekalanos J.J."/>
        </authorList>
    </citation>
    <scope>FUNCTION</scope>
    <scope>DISRUPTION PHENOTYPE</scope>
    <scope>INTERACTION WITH TSEL</scope>
    <scope>MUTAGENESIS OF ASP-842</scope>
    <scope>CATALYTIC ACTIVITY</scope>
    <source>
        <strain>V52</strain>
    </source>
</reference>
<reference key="3">
    <citation type="journal article" date="2013" name="J. Biol. Chem.">
        <title>Lytic activity of the Vibrio cholerae type VI secretion toxin VgrG-3 is inhibited by the antitoxin TsaB.</title>
        <authorList>
            <person name="Brooks T.M."/>
            <person name="Unterweger D."/>
            <person name="Bachmann V."/>
            <person name="Kostiuk B."/>
            <person name="Pukatzki S."/>
        </authorList>
    </citation>
    <scope>FUNCTION</scope>
    <scope>SUBCELLULAR LOCATION</scope>
    <scope>CATALYTIC ACTIVITY</scope>
    <scope>INTERACTION WITH TSIV3</scope>
    <source>
        <strain>V52</strain>
    </source>
</reference>
<reference key="4">
    <citation type="journal article" date="2019" name="Proc. Natl. Acad. Sci. U.S.A.">
        <title>An onboard checking mechanism ensures effector delivery of the type VI secretion system in Vibrio cholerae.</title>
        <authorList>
            <person name="Liang X."/>
            <person name="Kamal F."/>
            <person name="Pei T.T."/>
            <person name="Xu P."/>
            <person name="Mekalanos J.J."/>
            <person name="Dong T.G."/>
        </authorList>
    </citation>
    <scope>FUNCTION</scope>
</reference>
<reference evidence="8" key="5">
    <citation type="journal article" date="2014" name="Acta Crystallogr. D">
        <title>Molecular mechanism for self-protection against the type VI secretion system in Vibrio cholerae.</title>
        <authorList>
            <person name="Yang X."/>
            <person name="Xu M."/>
            <person name="Wang Y."/>
            <person name="Xia P."/>
            <person name="Wang S."/>
            <person name="Ye B."/>
            <person name="Tong L."/>
            <person name="Jiang T."/>
            <person name="Fan Z."/>
        </authorList>
    </citation>
    <scope>X-RAY CRYSTALLOGRAPHY (2.30 ANGSTROMS) OF 813-1017</scope>
    <scope>FUNCTION</scope>
    <scope>INTERACTION WITH TSIV3</scope>
    <scope>CATALYTIC ACTIVITY</scope>
    <scope>MUTAGENESIS OF GLU-827 AND ASP-842</scope>
</reference>
<reference evidence="9" key="6">
    <citation type="journal article" date="2014" name="FEBS Lett.">
        <title>Structural basis for recognition of the type VI spike protein VgrG3 by a cognate immunity protein.</title>
        <authorList>
            <person name="Zhang J."/>
            <person name="Zhang H."/>
            <person name="Gao Z."/>
            <person name="Hu H."/>
            <person name="Dong C."/>
            <person name="Dong Y.H."/>
        </authorList>
    </citation>
    <scope>X-RAY CRYSTALLOGRAPHY (2.40 ANGSTROMS) OF 731-1009</scope>
    <scope>INTERACTION WITH TSIV3</scope>
</reference>
<keyword id="KW-0002">3D-structure</keyword>
<keyword id="KW-0378">Hydrolase</keyword>
<keyword id="KW-1185">Reference proteome</keyword>
<keyword id="KW-0964">Secreted</keyword>
<name>VGRG3_VIBCH</name>